<comment type="function">
    <text>Involved in 6-O-carbamoylation of Nod-factors.</text>
</comment>
<comment type="similarity">
    <text evidence="1">Belongs to the NodU/CmcH family.</text>
</comment>
<reference key="1">
    <citation type="journal article" date="1995" name="Mol. Plant Microbe Interact.">
        <title>The nodS gene of Rhizobium tropici strain CIAT899 is necessary for nodulation on Phaseolus vulgaris and on Leucaena leucocephala.</title>
        <authorList>
            <person name="Waelkens F."/>
            <person name="Voets T."/>
            <person name="Vlassak K."/>
            <person name="Vanderleyden J."/>
            <person name="van Rhijn P."/>
        </authorList>
    </citation>
    <scope>NUCLEOTIDE SEQUENCE [GENOMIC DNA]</scope>
    <source>
        <strain>CIAT899</strain>
    </source>
</reference>
<gene>
    <name type="primary">nodU</name>
</gene>
<sequence length="575" mass="62610">MRICGIKLTHDGAIALIEDGRLVFCIEQEKQDNNRRYQTIDNLDAIVTALAEHGLNPSDVDQFVIDGWDGEIESRFQVLSGAAPVTLTGAPYVERHPDGLLDSLDGSGLILDDRVLSYKSYPHVTGHVASAYCTSPFAKAGEAAFCLVWGGCIFPRLYHVDGHGARFLESLFPMIGQAYAAAGHYFGPYKQPSRAGWDLGVAGKLMAYIALSSIDEDIVAVFEELYEEHFSGDAERACRYRANINDAESSLIAVHDFFDASVVRLEDKAPENVLASFHSFLELLLVREMALAMQRHSLPGPRNLCIAGGCGLNIKWNSALRETGLFDAVWVPPFPNDSGSAIGAACSAMAAHEGFVPLEWSVYSGPALKNGDAPPGWEAAPCSILELATILASNKPVVFLAGRAELGPRALGGRSILAAATSPQMKDYLNEVKFREHFRPVAPICLEDLAPDIFSPGTPDPYMLFDHQTRPEWKDKIPAVVHLDGSARLQTISRSSEHAVTELLIEYEKLTGIPLLCNTSANLHGRGFFPDAAAACEWGRIDHVWCNGVLFTKERVAELAPVGVADNMKMSTCPR</sequence>
<geneLocation type="plasmid">
    <name>sym</name>
</geneLocation>
<feature type="chain" id="PRO_0000207851" description="Nodulation protein U">
    <location>
        <begin position="1"/>
        <end position="575"/>
    </location>
</feature>
<accession>Q53515</accession>
<dbReference type="EC" id="2.1.3.-"/>
<dbReference type="EMBL" id="S77171">
    <property type="protein sequence ID" value="AAB34511.1"/>
    <property type="molecule type" value="Genomic_DNA"/>
</dbReference>
<dbReference type="RefSeq" id="WP_004125972.1">
    <property type="nucleotide sequence ID" value="NZ_JACIFW010000028.1"/>
</dbReference>
<dbReference type="SMR" id="Q53515"/>
<dbReference type="GO" id="GO:0016740">
    <property type="term" value="F:transferase activity"/>
    <property type="evidence" value="ECO:0007669"/>
    <property type="project" value="UniProtKB-KW"/>
</dbReference>
<dbReference type="GO" id="GO:0009058">
    <property type="term" value="P:biosynthetic process"/>
    <property type="evidence" value="ECO:0007669"/>
    <property type="project" value="InterPro"/>
</dbReference>
<dbReference type="CDD" id="cd24101">
    <property type="entry name" value="ASKHA_NBD_NodU_N"/>
    <property type="match status" value="1"/>
</dbReference>
<dbReference type="Gene3D" id="3.30.420.40">
    <property type="match status" value="2"/>
</dbReference>
<dbReference type="Gene3D" id="3.90.870.20">
    <property type="entry name" value="Carbamoyltransferase, C-terminal domain"/>
    <property type="match status" value="1"/>
</dbReference>
<dbReference type="InterPro" id="IPR043129">
    <property type="entry name" value="ATPase_NBD"/>
</dbReference>
<dbReference type="InterPro" id="IPR031730">
    <property type="entry name" value="Carbam_trans_C"/>
</dbReference>
<dbReference type="InterPro" id="IPR038152">
    <property type="entry name" value="Carbam_trans_C_sf"/>
</dbReference>
<dbReference type="InterPro" id="IPR003696">
    <property type="entry name" value="Carbtransf_dom"/>
</dbReference>
<dbReference type="InterPro" id="IPR051338">
    <property type="entry name" value="NodU/CmcH_Carbamoyltrnsfr"/>
</dbReference>
<dbReference type="InterPro" id="IPR048155">
    <property type="entry name" value="Nodul_NodU"/>
</dbReference>
<dbReference type="NCBIfam" id="NF041651">
    <property type="entry name" value="nodul_NodU"/>
    <property type="match status" value="1"/>
</dbReference>
<dbReference type="PANTHER" id="PTHR34847">
    <property type="entry name" value="NODULATION PROTEIN U"/>
    <property type="match status" value="1"/>
</dbReference>
<dbReference type="PANTHER" id="PTHR34847:SF1">
    <property type="entry name" value="NODULATION PROTEIN U"/>
    <property type="match status" value="1"/>
</dbReference>
<dbReference type="Pfam" id="PF16861">
    <property type="entry name" value="Carbam_trans_C"/>
    <property type="match status" value="1"/>
</dbReference>
<dbReference type="Pfam" id="PF02543">
    <property type="entry name" value="Carbam_trans_N"/>
    <property type="match status" value="1"/>
</dbReference>
<dbReference type="SUPFAM" id="SSF53067">
    <property type="entry name" value="Actin-like ATPase domain"/>
    <property type="match status" value="1"/>
</dbReference>
<name>NODU_RHITR</name>
<organism>
    <name type="scientific">Rhizobium tropici</name>
    <dbReference type="NCBI Taxonomy" id="398"/>
    <lineage>
        <taxon>Bacteria</taxon>
        <taxon>Pseudomonadati</taxon>
        <taxon>Pseudomonadota</taxon>
        <taxon>Alphaproteobacteria</taxon>
        <taxon>Hyphomicrobiales</taxon>
        <taxon>Rhizobiaceae</taxon>
        <taxon>Rhizobium/Agrobacterium group</taxon>
        <taxon>Rhizobium</taxon>
    </lineage>
</organism>
<protein>
    <recommendedName>
        <fullName>Nodulation protein U</fullName>
        <ecNumber>2.1.3.-</ecNumber>
    </recommendedName>
</protein>
<evidence type="ECO:0000305" key="1"/>
<keyword id="KW-0536">Nodulation</keyword>
<keyword id="KW-0614">Plasmid</keyword>
<keyword id="KW-0808">Transferase</keyword>
<proteinExistence type="inferred from homology"/>